<proteinExistence type="inferred from homology"/>
<gene>
    <name evidence="1" type="primary">tyrS</name>
    <name type="ordered locus">GK2803</name>
</gene>
<dbReference type="EC" id="6.1.1.1" evidence="1"/>
<dbReference type="EMBL" id="BA000043">
    <property type="protein sequence ID" value="BAD77088.1"/>
    <property type="molecule type" value="Genomic_DNA"/>
</dbReference>
<dbReference type="RefSeq" id="WP_011232277.1">
    <property type="nucleotide sequence ID" value="NC_006510.1"/>
</dbReference>
<dbReference type="BMRB" id="Q5KW48"/>
<dbReference type="SMR" id="Q5KW48"/>
<dbReference type="STRING" id="235909.GK2803"/>
<dbReference type="KEGG" id="gka:GK2803"/>
<dbReference type="PATRIC" id="fig|235909.7.peg.2989"/>
<dbReference type="eggNOG" id="COG0162">
    <property type="taxonomic scope" value="Bacteria"/>
</dbReference>
<dbReference type="HOGENOM" id="CLU_024003_0_3_9"/>
<dbReference type="Proteomes" id="UP000001172">
    <property type="component" value="Chromosome"/>
</dbReference>
<dbReference type="GO" id="GO:0005829">
    <property type="term" value="C:cytosol"/>
    <property type="evidence" value="ECO:0007669"/>
    <property type="project" value="TreeGrafter"/>
</dbReference>
<dbReference type="GO" id="GO:0005524">
    <property type="term" value="F:ATP binding"/>
    <property type="evidence" value="ECO:0007669"/>
    <property type="project" value="UniProtKB-UniRule"/>
</dbReference>
<dbReference type="GO" id="GO:0003723">
    <property type="term" value="F:RNA binding"/>
    <property type="evidence" value="ECO:0007669"/>
    <property type="project" value="UniProtKB-KW"/>
</dbReference>
<dbReference type="GO" id="GO:0004831">
    <property type="term" value="F:tyrosine-tRNA ligase activity"/>
    <property type="evidence" value="ECO:0007669"/>
    <property type="project" value="UniProtKB-UniRule"/>
</dbReference>
<dbReference type="GO" id="GO:0006437">
    <property type="term" value="P:tyrosyl-tRNA aminoacylation"/>
    <property type="evidence" value="ECO:0007669"/>
    <property type="project" value="UniProtKB-UniRule"/>
</dbReference>
<dbReference type="CDD" id="cd00165">
    <property type="entry name" value="S4"/>
    <property type="match status" value="1"/>
</dbReference>
<dbReference type="CDD" id="cd00395">
    <property type="entry name" value="Tyr_Trp_RS_core"/>
    <property type="match status" value="1"/>
</dbReference>
<dbReference type="FunFam" id="1.10.240.10:FF:000001">
    <property type="entry name" value="Tyrosine--tRNA ligase"/>
    <property type="match status" value="1"/>
</dbReference>
<dbReference type="FunFam" id="3.10.290.10:FF:000012">
    <property type="entry name" value="Tyrosine--tRNA ligase"/>
    <property type="match status" value="1"/>
</dbReference>
<dbReference type="FunFam" id="3.40.50.620:FF:000008">
    <property type="entry name" value="Tyrosine--tRNA ligase"/>
    <property type="match status" value="1"/>
</dbReference>
<dbReference type="Gene3D" id="3.40.50.620">
    <property type="entry name" value="HUPs"/>
    <property type="match status" value="1"/>
</dbReference>
<dbReference type="Gene3D" id="3.10.290.10">
    <property type="entry name" value="RNA-binding S4 domain"/>
    <property type="match status" value="1"/>
</dbReference>
<dbReference type="Gene3D" id="1.10.240.10">
    <property type="entry name" value="Tyrosyl-Transfer RNA Synthetase"/>
    <property type="match status" value="1"/>
</dbReference>
<dbReference type="HAMAP" id="MF_02006">
    <property type="entry name" value="Tyr_tRNA_synth_type1"/>
    <property type="match status" value="1"/>
</dbReference>
<dbReference type="InterPro" id="IPR001412">
    <property type="entry name" value="aa-tRNA-synth_I_CS"/>
</dbReference>
<dbReference type="InterPro" id="IPR002305">
    <property type="entry name" value="aa-tRNA-synth_Ic"/>
</dbReference>
<dbReference type="InterPro" id="IPR014729">
    <property type="entry name" value="Rossmann-like_a/b/a_fold"/>
</dbReference>
<dbReference type="InterPro" id="IPR002942">
    <property type="entry name" value="S4_RNA-bd"/>
</dbReference>
<dbReference type="InterPro" id="IPR036986">
    <property type="entry name" value="S4_RNA-bd_sf"/>
</dbReference>
<dbReference type="InterPro" id="IPR054608">
    <property type="entry name" value="SYY-like_C"/>
</dbReference>
<dbReference type="InterPro" id="IPR002307">
    <property type="entry name" value="Tyr-tRNA-ligase"/>
</dbReference>
<dbReference type="InterPro" id="IPR024088">
    <property type="entry name" value="Tyr-tRNA-ligase_bac-type"/>
</dbReference>
<dbReference type="InterPro" id="IPR024107">
    <property type="entry name" value="Tyr-tRNA-ligase_bac_1"/>
</dbReference>
<dbReference type="NCBIfam" id="TIGR00234">
    <property type="entry name" value="tyrS"/>
    <property type="match status" value="1"/>
</dbReference>
<dbReference type="PANTHER" id="PTHR11766:SF0">
    <property type="entry name" value="TYROSINE--TRNA LIGASE, MITOCHONDRIAL"/>
    <property type="match status" value="1"/>
</dbReference>
<dbReference type="PANTHER" id="PTHR11766">
    <property type="entry name" value="TYROSYL-TRNA SYNTHETASE"/>
    <property type="match status" value="1"/>
</dbReference>
<dbReference type="Pfam" id="PF22421">
    <property type="entry name" value="SYY_C-terminal"/>
    <property type="match status" value="1"/>
</dbReference>
<dbReference type="Pfam" id="PF00579">
    <property type="entry name" value="tRNA-synt_1b"/>
    <property type="match status" value="1"/>
</dbReference>
<dbReference type="PRINTS" id="PR01040">
    <property type="entry name" value="TRNASYNTHTYR"/>
</dbReference>
<dbReference type="SMART" id="SM00363">
    <property type="entry name" value="S4"/>
    <property type="match status" value="1"/>
</dbReference>
<dbReference type="SUPFAM" id="SSF55174">
    <property type="entry name" value="Alpha-L RNA-binding motif"/>
    <property type="match status" value="1"/>
</dbReference>
<dbReference type="SUPFAM" id="SSF52374">
    <property type="entry name" value="Nucleotidylyl transferase"/>
    <property type="match status" value="1"/>
</dbReference>
<dbReference type="PROSITE" id="PS00178">
    <property type="entry name" value="AA_TRNA_LIGASE_I"/>
    <property type="match status" value="1"/>
</dbReference>
<dbReference type="PROSITE" id="PS50889">
    <property type="entry name" value="S4"/>
    <property type="match status" value="1"/>
</dbReference>
<reference key="1">
    <citation type="journal article" date="2004" name="Nucleic Acids Res.">
        <title>Thermoadaptation trait revealed by the genome sequence of thermophilic Geobacillus kaustophilus.</title>
        <authorList>
            <person name="Takami H."/>
            <person name="Takaki Y."/>
            <person name="Chee G.-J."/>
            <person name="Nishi S."/>
            <person name="Shimamura S."/>
            <person name="Suzuki H."/>
            <person name="Matsui S."/>
            <person name="Uchiyama I."/>
        </authorList>
    </citation>
    <scope>NUCLEOTIDE SEQUENCE [LARGE SCALE GENOMIC DNA]</scope>
    <source>
        <strain>HTA426</strain>
    </source>
</reference>
<sequence>MDLLAELQWRGLVNQTTDEDGLRKLLNEERVTLYCGFDPTADSLHIGNLAAILTLRRFQQAGHRPIALVGGATGLIGDPSGKKSERTLNAKETVEAWSARIKEQLGRFLDFEADGNPAKIKNNYDWIGPLDVITFLRDVGKHFSVNYMMAKESVQSRIETGISFTEFSYMMLQAYDFLRLYETEGCRLQIGGSDQWGNITAGLELIRKTKGEARAFGLTIPLVTKADGTKFGKTESGTIWLDKEKTSPYEFYQFWINTDDRDVIRYLKYFTFLSKEEIEALEQELREAPEKRAAQKALAEEVTKLVHGEEALRQAIRISEALFSGDIANLTAAEIEQGFKDVPSFVHEGGDVPLVELLVSAGISPSKRQAREDIQSGAIYVNGERLQDVGAILTAEHRLEGRFTVIRRGKKKYYLIRYA</sequence>
<keyword id="KW-0030">Aminoacyl-tRNA synthetase</keyword>
<keyword id="KW-0067">ATP-binding</keyword>
<keyword id="KW-0963">Cytoplasm</keyword>
<keyword id="KW-0436">Ligase</keyword>
<keyword id="KW-0547">Nucleotide-binding</keyword>
<keyword id="KW-0648">Protein biosynthesis</keyword>
<keyword id="KW-1185">Reference proteome</keyword>
<keyword id="KW-0694">RNA-binding</keyword>
<organism>
    <name type="scientific">Geobacillus kaustophilus (strain HTA426)</name>
    <dbReference type="NCBI Taxonomy" id="235909"/>
    <lineage>
        <taxon>Bacteria</taxon>
        <taxon>Bacillati</taxon>
        <taxon>Bacillota</taxon>
        <taxon>Bacilli</taxon>
        <taxon>Bacillales</taxon>
        <taxon>Anoxybacillaceae</taxon>
        <taxon>Geobacillus</taxon>
        <taxon>Geobacillus thermoleovorans group</taxon>
    </lineage>
</organism>
<comment type="function">
    <text evidence="1">Catalyzes the attachment of tyrosine to tRNA(Tyr) in a two-step reaction: tyrosine is first activated by ATP to form Tyr-AMP and then transferred to the acceptor end of tRNA(Tyr).</text>
</comment>
<comment type="catalytic activity">
    <reaction evidence="1">
        <text>tRNA(Tyr) + L-tyrosine + ATP = L-tyrosyl-tRNA(Tyr) + AMP + diphosphate + H(+)</text>
        <dbReference type="Rhea" id="RHEA:10220"/>
        <dbReference type="Rhea" id="RHEA-COMP:9706"/>
        <dbReference type="Rhea" id="RHEA-COMP:9707"/>
        <dbReference type="ChEBI" id="CHEBI:15378"/>
        <dbReference type="ChEBI" id="CHEBI:30616"/>
        <dbReference type="ChEBI" id="CHEBI:33019"/>
        <dbReference type="ChEBI" id="CHEBI:58315"/>
        <dbReference type="ChEBI" id="CHEBI:78442"/>
        <dbReference type="ChEBI" id="CHEBI:78536"/>
        <dbReference type="ChEBI" id="CHEBI:456215"/>
        <dbReference type="EC" id="6.1.1.1"/>
    </reaction>
</comment>
<comment type="subunit">
    <text evidence="1">Homodimer.</text>
</comment>
<comment type="subcellular location">
    <subcellularLocation>
        <location evidence="1">Cytoplasm</location>
    </subcellularLocation>
</comment>
<comment type="similarity">
    <text evidence="1">Belongs to the class-I aminoacyl-tRNA synthetase family. TyrS type 1 subfamily.</text>
</comment>
<feature type="chain" id="PRO_0000234713" description="Tyrosine--tRNA ligase">
    <location>
        <begin position="1"/>
        <end position="419"/>
    </location>
</feature>
<feature type="domain" description="S4 RNA-binding" evidence="1">
    <location>
        <begin position="352"/>
        <end position="419"/>
    </location>
</feature>
<feature type="short sequence motif" description="'HIGH' region">
    <location>
        <begin position="39"/>
        <end position="48"/>
    </location>
</feature>
<feature type="short sequence motif" description="'KMSKS' region">
    <location>
        <begin position="230"/>
        <end position="234"/>
    </location>
</feature>
<feature type="binding site" evidence="1">
    <location>
        <position position="34"/>
    </location>
    <ligand>
        <name>L-tyrosine</name>
        <dbReference type="ChEBI" id="CHEBI:58315"/>
    </ligand>
</feature>
<feature type="binding site" evidence="1">
    <location>
        <position position="169"/>
    </location>
    <ligand>
        <name>L-tyrosine</name>
        <dbReference type="ChEBI" id="CHEBI:58315"/>
    </ligand>
</feature>
<feature type="binding site" evidence="1">
    <location>
        <position position="173"/>
    </location>
    <ligand>
        <name>L-tyrosine</name>
        <dbReference type="ChEBI" id="CHEBI:58315"/>
    </ligand>
</feature>
<feature type="binding site" evidence="1">
    <location>
        <position position="233"/>
    </location>
    <ligand>
        <name>ATP</name>
        <dbReference type="ChEBI" id="CHEBI:30616"/>
    </ligand>
</feature>
<protein>
    <recommendedName>
        <fullName evidence="1">Tyrosine--tRNA ligase</fullName>
        <ecNumber evidence="1">6.1.1.1</ecNumber>
    </recommendedName>
    <alternativeName>
        <fullName evidence="1">Tyrosyl-tRNA synthetase</fullName>
        <shortName evidence="1">TyrRS</shortName>
    </alternativeName>
</protein>
<accession>Q5KW48</accession>
<evidence type="ECO:0000255" key="1">
    <source>
        <dbReference type="HAMAP-Rule" id="MF_02006"/>
    </source>
</evidence>
<name>SYY_GEOKA</name>